<gene>
    <name evidence="1" type="primary">cobD</name>
    <name type="ordered locus">PST_1295</name>
</gene>
<name>COBD_STUS1</name>
<protein>
    <recommendedName>
        <fullName evidence="1">Cobalamin biosynthesis protein CobD</fullName>
    </recommendedName>
</protein>
<accession>A4VJ38</accession>
<reference key="1">
    <citation type="journal article" date="2008" name="Proc. Natl. Acad. Sci. U.S.A.">
        <title>Nitrogen fixation island and rhizosphere competence traits in the genome of root-associated Pseudomonas stutzeri A1501.</title>
        <authorList>
            <person name="Yan Y."/>
            <person name="Yang J."/>
            <person name="Dou Y."/>
            <person name="Chen M."/>
            <person name="Ping S."/>
            <person name="Peng J."/>
            <person name="Lu W."/>
            <person name="Zhang W."/>
            <person name="Yao Z."/>
            <person name="Li H."/>
            <person name="Liu W."/>
            <person name="He S."/>
            <person name="Geng L."/>
            <person name="Zhang X."/>
            <person name="Yang F."/>
            <person name="Yu H."/>
            <person name="Zhan Y."/>
            <person name="Li D."/>
            <person name="Lin Z."/>
            <person name="Wang Y."/>
            <person name="Elmerich C."/>
            <person name="Lin M."/>
            <person name="Jin Q."/>
        </authorList>
    </citation>
    <scope>NUCLEOTIDE SEQUENCE [LARGE SCALE GENOMIC DNA]</scope>
    <source>
        <strain>A1501</strain>
    </source>
</reference>
<keyword id="KW-1003">Cell membrane</keyword>
<keyword id="KW-0169">Cobalamin biosynthesis</keyword>
<keyword id="KW-0472">Membrane</keyword>
<keyword id="KW-1185">Reference proteome</keyword>
<keyword id="KW-0812">Transmembrane</keyword>
<keyword id="KW-1133">Transmembrane helix</keyword>
<dbReference type="EMBL" id="CP000304">
    <property type="protein sequence ID" value="ABP78989.1"/>
    <property type="molecule type" value="Genomic_DNA"/>
</dbReference>
<dbReference type="RefSeq" id="WP_011912473.1">
    <property type="nucleotide sequence ID" value="NC_009434.1"/>
</dbReference>
<dbReference type="KEGG" id="psa:PST_1295"/>
<dbReference type="eggNOG" id="COG1270">
    <property type="taxonomic scope" value="Bacteria"/>
</dbReference>
<dbReference type="HOGENOM" id="CLU_054212_1_0_6"/>
<dbReference type="UniPathway" id="UPA00148"/>
<dbReference type="Proteomes" id="UP000000233">
    <property type="component" value="Chromosome"/>
</dbReference>
<dbReference type="GO" id="GO:0005886">
    <property type="term" value="C:plasma membrane"/>
    <property type="evidence" value="ECO:0007669"/>
    <property type="project" value="UniProtKB-SubCell"/>
</dbReference>
<dbReference type="GO" id="GO:0015420">
    <property type="term" value="F:ABC-type vitamin B12 transporter activity"/>
    <property type="evidence" value="ECO:0007669"/>
    <property type="project" value="UniProtKB-UniRule"/>
</dbReference>
<dbReference type="GO" id="GO:0048472">
    <property type="term" value="F:threonine-phosphate decarboxylase activity"/>
    <property type="evidence" value="ECO:0007669"/>
    <property type="project" value="InterPro"/>
</dbReference>
<dbReference type="GO" id="GO:0009236">
    <property type="term" value="P:cobalamin biosynthetic process"/>
    <property type="evidence" value="ECO:0007669"/>
    <property type="project" value="UniProtKB-UniRule"/>
</dbReference>
<dbReference type="HAMAP" id="MF_00024">
    <property type="entry name" value="CobD_CbiB"/>
    <property type="match status" value="1"/>
</dbReference>
<dbReference type="InterPro" id="IPR004485">
    <property type="entry name" value="Cobalamin_biosynth_CobD/CbiB"/>
</dbReference>
<dbReference type="NCBIfam" id="TIGR00380">
    <property type="entry name" value="cobal_cbiB"/>
    <property type="match status" value="1"/>
</dbReference>
<dbReference type="PANTHER" id="PTHR34308">
    <property type="entry name" value="COBALAMIN BIOSYNTHESIS PROTEIN CBIB"/>
    <property type="match status" value="1"/>
</dbReference>
<dbReference type="PANTHER" id="PTHR34308:SF1">
    <property type="entry name" value="COBALAMIN BIOSYNTHESIS PROTEIN CBIB"/>
    <property type="match status" value="1"/>
</dbReference>
<dbReference type="Pfam" id="PF03186">
    <property type="entry name" value="CobD_Cbib"/>
    <property type="match status" value="1"/>
</dbReference>
<feature type="chain" id="PRO_1000090207" description="Cobalamin biosynthesis protein CobD">
    <location>
        <begin position="1"/>
        <end position="303"/>
    </location>
</feature>
<feature type="transmembrane region" description="Helical" evidence="1">
    <location>
        <begin position="65"/>
        <end position="85"/>
    </location>
</feature>
<feature type="transmembrane region" description="Helical" evidence="1">
    <location>
        <begin position="147"/>
        <end position="167"/>
    </location>
</feature>
<feature type="transmembrane region" description="Helical" evidence="1">
    <location>
        <begin position="235"/>
        <end position="255"/>
    </location>
</feature>
<feature type="transmembrane region" description="Helical" evidence="1">
    <location>
        <begin position="283"/>
        <end position="303"/>
    </location>
</feature>
<sequence>MSVFLSVIGALLLDALLGEPKRAHPLVAFGRLADRLEQHFNGAAGRGWRSHGVTAWCLAVLPLTLLAWLLSLLPGIGWLAEIVLLYLALGLRSLGEHALPVAQALWRHDLPEARRRVACIVSRDTSQLDEEGVARAATESVLENGSDAVFAALFWFIVAGAPGVVLYRLSNTLDAMWGYRNARFERFGWAAARIDDLLNYVPARLVAVTYALLGRTRRALRCWRTQAPLWDSPNAGPVMAAGAGALGVVLGGAAIYHGELHARPELGRGSAPQARHIEHALDLVWAGVGVWLLVLLFGGWLYA</sequence>
<organism>
    <name type="scientific">Stutzerimonas stutzeri (strain A1501)</name>
    <name type="common">Pseudomonas stutzeri</name>
    <dbReference type="NCBI Taxonomy" id="379731"/>
    <lineage>
        <taxon>Bacteria</taxon>
        <taxon>Pseudomonadati</taxon>
        <taxon>Pseudomonadota</taxon>
        <taxon>Gammaproteobacteria</taxon>
        <taxon>Pseudomonadales</taxon>
        <taxon>Pseudomonadaceae</taxon>
        <taxon>Stutzerimonas</taxon>
    </lineage>
</organism>
<comment type="function">
    <text evidence="1">Converts cobyric acid to cobinamide by the addition of aminopropanol on the F carboxylic group.</text>
</comment>
<comment type="pathway">
    <text evidence="1">Cofactor biosynthesis; adenosylcobalamin biosynthesis.</text>
</comment>
<comment type="subcellular location">
    <subcellularLocation>
        <location evidence="1">Cell membrane</location>
        <topology evidence="1">Multi-pass membrane protein</topology>
    </subcellularLocation>
</comment>
<comment type="similarity">
    <text evidence="1">Belongs to the CobD/CbiB family.</text>
</comment>
<evidence type="ECO:0000255" key="1">
    <source>
        <dbReference type="HAMAP-Rule" id="MF_00024"/>
    </source>
</evidence>
<proteinExistence type="inferred from homology"/>